<reference key="1">
    <citation type="journal article" date="2007" name="J. Bacteriol.">
        <title>Genome-wide transcriptional changes in Streptococcus gordonii in response to competence signaling peptide.</title>
        <authorList>
            <person name="Vickerman M.M."/>
            <person name="Iobst S."/>
            <person name="Jesionowski A.M."/>
            <person name="Gill S.R."/>
        </authorList>
    </citation>
    <scope>NUCLEOTIDE SEQUENCE [LARGE SCALE GENOMIC DNA]</scope>
    <source>
        <strain>Challis / ATCC 35105 / BCRC 15272 / CH1 / DL1 / V288</strain>
    </source>
</reference>
<feature type="chain" id="PRO_1000079068" description="V-type ATP synthase beta chain">
    <location>
        <begin position="1"/>
        <end position="464"/>
    </location>
</feature>
<protein>
    <recommendedName>
        <fullName evidence="1">V-type ATP synthase beta chain</fullName>
    </recommendedName>
    <alternativeName>
        <fullName evidence="1">V-ATPase subunit B</fullName>
    </alternativeName>
</protein>
<keyword id="KW-0066">ATP synthesis</keyword>
<keyword id="KW-0375">Hydrogen ion transport</keyword>
<keyword id="KW-0406">Ion transport</keyword>
<keyword id="KW-1185">Reference proteome</keyword>
<keyword id="KW-0813">Transport</keyword>
<organism>
    <name type="scientific">Streptococcus gordonii (strain Challis / ATCC 35105 / BCRC 15272 / CH1 / DL1 / V288)</name>
    <dbReference type="NCBI Taxonomy" id="467705"/>
    <lineage>
        <taxon>Bacteria</taxon>
        <taxon>Bacillati</taxon>
        <taxon>Bacillota</taxon>
        <taxon>Bacilli</taxon>
        <taxon>Lactobacillales</taxon>
        <taxon>Streptococcaceae</taxon>
        <taxon>Streptococcus</taxon>
    </lineage>
</organism>
<evidence type="ECO:0000255" key="1">
    <source>
        <dbReference type="HAMAP-Rule" id="MF_00310"/>
    </source>
</evidence>
<accession>A8AUJ8</accession>
<sequence length="464" mass="51746">MSVIKEYRTVSEVVGPLMIVDQVAGVHFNELVEIQLHDGSKRQGQVLEVQEDKAMVQLFEGSSGINLEKAKVRFTGRPLELPVSEDMVGRIFNGMGKPIDGGPAILPEKYLDIDGQAINPVARDYPDEFIQTGISAIDHLNTLVRGQKLPVFSGSGLPHKELAAQIARQATVLNSDENFAVVFAAMGITFEEAEFFMNDLRETGAIDRSVLFINLANDPAIERIATPRIALTAAEYLAYEKDMHVLVIMTDMTNYCEALREVSAARREVPGRRGYPGYLYTNLSTLYERAGRLVGKKGSVTQIPILSMPEDDITHPIPDLTGYITEGQIILSRDLYNSGYRPPINVLPSLSRLKDKGSGEGKTRGDHAATMNQLFAAYAQGKQAKELAVVLGESALSETDKLYVRFTDRFEQEYINQGFQTNRTIEESLDLGWELLSILPRTELKRIKDDMIDQYLPQTKEEER</sequence>
<name>VATB_STRGC</name>
<dbReference type="EMBL" id="CP000725">
    <property type="protein sequence ID" value="ABV09355.1"/>
    <property type="molecule type" value="Genomic_DNA"/>
</dbReference>
<dbReference type="RefSeq" id="WP_002902006.1">
    <property type="nucleotide sequence ID" value="NC_009785.1"/>
</dbReference>
<dbReference type="SMR" id="A8AUJ8"/>
<dbReference type="STRING" id="467705.SGO_0136"/>
<dbReference type="KEGG" id="sgo:SGO_0136"/>
<dbReference type="eggNOG" id="COG1156">
    <property type="taxonomic scope" value="Bacteria"/>
</dbReference>
<dbReference type="HOGENOM" id="CLU_022916_0_0_9"/>
<dbReference type="Proteomes" id="UP000001131">
    <property type="component" value="Chromosome"/>
</dbReference>
<dbReference type="GO" id="GO:0005524">
    <property type="term" value="F:ATP binding"/>
    <property type="evidence" value="ECO:0007669"/>
    <property type="project" value="UniProtKB-UniRule"/>
</dbReference>
<dbReference type="GO" id="GO:0046933">
    <property type="term" value="F:proton-transporting ATP synthase activity, rotational mechanism"/>
    <property type="evidence" value="ECO:0007669"/>
    <property type="project" value="UniProtKB-UniRule"/>
</dbReference>
<dbReference type="GO" id="GO:0042777">
    <property type="term" value="P:proton motive force-driven plasma membrane ATP synthesis"/>
    <property type="evidence" value="ECO:0007669"/>
    <property type="project" value="UniProtKB-UniRule"/>
</dbReference>
<dbReference type="CDD" id="cd18112">
    <property type="entry name" value="ATP-synt_V_A-type_beta_C"/>
    <property type="match status" value="1"/>
</dbReference>
<dbReference type="CDD" id="cd18118">
    <property type="entry name" value="ATP-synt_V_A-type_beta_N"/>
    <property type="match status" value="1"/>
</dbReference>
<dbReference type="CDD" id="cd01135">
    <property type="entry name" value="V_A-ATPase_B"/>
    <property type="match status" value="1"/>
</dbReference>
<dbReference type="Gene3D" id="3.40.50.12240">
    <property type="match status" value="1"/>
</dbReference>
<dbReference type="HAMAP" id="MF_00310">
    <property type="entry name" value="ATP_synth_B_arch"/>
    <property type="match status" value="1"/>
</dbReference>
<dbReference type="InterPro" id="IPR055190">
    <property type="entry name" value="ATP-synt_VA_C"/>
</dbReference>
<dbReference type="InterPro" id="IPR020003">
    <property type="entry name" value="ATPase_a/bsu_AS"/>
</dbReference>
<dbReference type="InterPro" id="IPR004100">
    <property type="entry name" value="ATPase_F1/V1/A1_a/bsu_N"/>
</dbReference>
<dbReference type="InterPro" id="IPR000194">
    <property type="entry name" value="ATPase_F1/V1/A1_a/bsu_nucl-bd"/>
</dbReference>
<dbReference type="InterPro" id="IPR027417">
    <property type="entry name" value="P-loop_NTPase"/>
</dbReference>
<dbReference type="InterPro" id="IPR022879">
    <property type="entry name" value="V-ATPase_su_B/beta"/>
</dbReference>
<dbReference type="NCBIfam" id="NF003235">
    <property type="entry name" value="PRK04196.1"/>
    <property type="match status" value="1"/>
</dbReference>
<dbReference type="PANTHER" id="PTHR43389">
    <property type="entry name" value="V-TYPE PROTON ATPASE SUBUNIT B"/>
    <property type="match status" value="1"/>
</dbReference>
<dbReference type="PANTHER" id="PTHR43389:SF4">
    <property type="entry name" value="V-TYPE PROTON ATPASE SUBUNIT B"/>
    <property type="match status" value="1"/>
</dbReference>
<dbReference type="Pfam" id="PF00006">
    <property type="entry name" value="ATP-synt_ab"/>
    <property type="match status" value="1"/>
</dbReference>
<dbReference type="Pfam" id="PF02874">
    <property type="entry name" value="ATP-synt_ab_N"/>
    <property type="match status" value="1"/>
</dbReference>
<dbReference type="Pfam" id="PF22919">
    <property type="entry name" value="ATP-synt_VA_C"/>
    <property type="match status" value="1"/>
</dbReference>
<dbReference type="PIRSF" id="PIRSF039114">
    <property type="entry name" value="V-ATPsynth_beta/V-ATPase_B"/>
    <property type="match status" value="1"/>
</dbReference>
<dbReference type="SUPFAM" id="SSF47917">
    <property type="entry name" value="C-terminal domain of alpha and beta subunits of F1 ATP synthase"/>
    <property type="match status" value="1"/>
</dbReference>
<dbReference type="SUPFAM" id="SSF52540">
    <property type="entry name" value="P-loop containing nucleoside triphosphate hydrolases"/>
    <property type="match status" value="1"/>
</dbReference>
<dbReference type="PROSITE" id="PS00152">
    <property type="entry name" value="ATPASE_ALPHA_BETA"/>
    <property type="match status" value="1"/>
</dbReference>
<gene>
    <name evidence="1" type="primary">atpB</name>
    <name type="ordered locus">SGO_0136</name>
</gene>
<comment type="function">
    <text evidence="1">Produces ATP from ADP in the presence of a proton gradient across the membrane. The V-type beta chain is a regulatory subunit.</text>
</comment>
<comment type="similarity">
    <text evidence="1">Belongs to the ATPase alpha/beta chains family.</text>
</comment>
<proteinExistence type="inferred from homology"/>